<proteinExistence type="inferred from homology"/>
<comment type="function">
    <text evidence="1">Carrier of the growing fatty acid chain in fatty acid biosynthesis.</text>
</comment>
<comment type="pathway">
    <text evidence="1">Lipid metabolism; fatty acid biosynthesis.</text>
</comment>
<comment type="subcellular location">
    <subcellularLocation>
        <location evidence="1">Cytoplasm</location>
    </subcellularLocation>
</comment>
<comment type="PTM">
    <text evidence="1">4'-phosphopantetheine is transferred from CoA to a specific serine of apo-ACP by AcpS. This modification is essential for activity because fatty acids are bound in thioester linkage to the sulfhydryl of the prosthetic group.</text>
</comment>
<comment type="similarity">
    <text evidence="1">Belongs to the acyl carrier protein (ACP) family.</text>
</comment>
<sequence length="78" mass="8685">MSTIEERVKKIVAEQLGVKEEEVKNESSFVDDLGADSLDTVELVMALEEEFETEIPDEEAEKITTVQAAIDYVNAHQG</sequence>
<organism>
    <name type="scientific">Pseudomonas entomophila (strain L48)</name>
    <dbReference type="NCBI Taxonomy" id="384676"/>
    <lineage>
        <taxon>Bacteria</taxon>
        <taxon>Pseudomonadati</taxon>
        <taxon>Pseudomonadota</taxon>
        <taxon>Gammaproteobacteria</taxon>
        <taxon>Pseudomonadales</taxon>
        <taxon>Pseudomonadaceae</taxon>
        <taxon>Pseudomonas</taxon>
    </lineage>
</organism>
<name>ACP_PSEE4</name>
<dbReference type="EMBL" id="CT573326">
    <property type="protein sequence ID" value="CAK14477.1"/>
    <property type="molecule type" value="Genomic_DNA"/>
</dbReference>
<dbReference type="RefSeq" id="WP_011532887.1">
    <property type="nucleotide sequence ID" value="NC_008027.1"/>
</dbReference>
<dbReference type="SMR" id="Q1ICY6"/>
<dbReference type="STRING" id="384676.PSEEN1620"/>
<dbReference type="GeneID" id="32804861"/>
<dbReference type="KEGG" id="pen:PSEEN1620"/>
<dbReference type="eggNOG" id="COG0236">
    <property type="taxonomic scope" value="Bacteria"/>
</dbReference>
<dbReference type="HOGENOM" id="CLU_108696_5_1_6"/>
<dbReference type="OrthoDB" id="9804551at2"/>
<dbReference type="UniPathway" id="UPA00094"/>
<dbReference type="Proteomes" id="UP000000658">
    <property type="component" value="Chromosome"/>
</dbReference>
<dbReference type="GO" id="GO:0005829">
    <property type="term" value="C:cytosol"/>
    <property type="evidence" value="ECO:0007669"/>
    <property type="project" value="TreeGrafter"/>
</dbReference>
<dbReference type="GO" id="GO:0016020">
    <property type="term" value="C:membrane"/>
    <property type="evidence" value="ECO:0007669"/>
    <property type="project" value="GOC"/>
</dbReference>
<dbReference type="GO" id="GO:0000035">
    <property type="term" value="F:acyl binding"/>
    <property type="evidence" value="ECO:0007669"/>
    <property type="project" value="TreeGrafter"/>
</dbReference>
<dbReference type="GO" id="GO:0000036">
    <property type="term" value="F:acyl carrier activity"/>
    <property type="evidence" value="ECO:0007669"/>
    <property type="project" value="UniProtKB-UniRule"/>
</dbReference>
<dbReference type="GO" id="GO:0009245">
    <property type="term" value="P:lipid A biosynthetic process"/>
    <property type="evidence" value="ECO:0007669"/>
    <property type="project" value="TreeGrafter"/>
</dbReference>
<dbReference type="FunFam" id="1.10.1200.10:FF:000001">
    <property type="entry name" value="Acyl carrier protein"/>
    <property type="match status" value="1"/>
</dbReference>
<dbReference type="Gene3D" id="1.10.1200.10">
    <property type="entry name" value="ACP-like"/>
    <property type="match status" value="1"/>
</dbReference>
<dbReference type="HAMAP" id="MF_01217">
    <property type="entry name" value="Acyl_carrier"/>
    <property type="match status" value="1"/>
</dbReference>
<dbReference type="InterPro" id="IPR003231">
    <property type="entry name" value="ACP"/>
</dbReference>
<dbReference type="InterPro" id="IPR036736">
    <property type="entry name" value="ACP-like_sf"/>
</dbReference>
<dbReference type="InterPro" id="IPR009081">
    <property type="entry name" value="PP-bd_ACP"/>
</dbReference>
<dbReference type="InterPro" id="IPR006162">
    <property type="entry name" value="Ppantetheine_attach_site"/>
</dbReference>
<dbReference type="NCBIfam" id="TIGR00517">
    <property type="entry name" value="acyl_carrier"/>
    <property type="match status" value="1"/>
</dbReference>
<dbReference type="NCBIfam" id="NF002148">
    <property type="entry name" value="PRK00982.1-2"/>
    <property type="match status" value="1"/>
</dbReference>
<dbReference type="NCBIfam" id="NF002149">
    <property type="entry name" value="PRK00982.1-3"/>
    <property type="match status" value="1"/>
</dbReference>
<dbReference type="NCBIfam" id="NF002150">
    <property type="entry name" value="PRK00982.1-4"/>
    <property type="match status" value="1"/>
</dbReference>
<dbReference type="NCBIfam" id="NF002151">
    <property type="entry name" value="PRK00982.1-5"/>
    <property type="match status" value="1"/>
</dbReference>
<dbReference type="PANTHER" id="PTHR20863">
    <property type="entry name" value="ACYL CARRIER PROTEIN"/>
    <property type="match status" value="1"/>
</dbReference>
<dbReference type="PANTHER" id="PTHR20863:SF76">
    <property type="entry name" value="CARRIER DOMAIN-CONTAINING PROTEIN"/>
    <property type="match status" value="1"/>
</dbReference>
<dbReference type="Pfam" id="PF00550">
    <property type="entry name" value="PP-binding"/>
    <property type="match status" value="1"/>
</dbReference>
<dbReference type="SUPFAM" id="SSF47336">
    <property type="entry name" value="ACP-like"/>
    <property type="match status" value="1"/>
</dbReference>
<dbReference type="PROSITE" id="PS50075">
    <property type="entry name" value="CARRIER"/>
    <property type="match status" value="1"/>
</dbReference>
<dbReference type="PROSITE" id="PS00012">
    <property type="entry name" value="PHOSPHOPANTETHEINE"/>
    <property type="match status" value="1"/>
</dbReference>
<evidence type="ECO:0000255" key="1">
    <source>
        <dbReference type="HAMAP-Rule" id="MF_01217"/>
    </source>
</evidence>
<evidence type="ECO:0000255" key="2">
    <source>
        <dbReference type="PROSITE-ProRule" id="PRU00258"/>
    </source>
</evidence>
<accession>Q1ICY6</accession>
<gene>
    <name evidence="1" type="primary">acpP</name>
    <name type="ordered locus">PSEEN1620</name>
</gene>
<keyword id="KW-0963">Cytoplasm</keyword>
<keyword id="KW-0275">Fatty acid biosynthesis</keyword>
<keyword id="KW-0276">Fatty acid metabolism</keyword>
<keyword id="KW-0444">Lipid biosynthesis</keyword>
<keyword id="KW-0443">Lipid metabolism</keyword>
<keyword id="KW-0596">Phosphopantetheine</keyword>
<keyword id="KW-0597">Phosphoprotein</keyword>
<protein>
    <recommendedName>
        <fullName evidence="1">Acyl carrier protein</fullName>
        <shortName evidence="1">ACP</shortName>
    </recommendedName>
</protein>
<feature type="chain" id="PRO_1000066660" description="Acyl carrier protein">
    <location>
        <begin position="1"/>
        <end position="78"/>
    </location>
</feature>
<feature type="domain" description="Carrier" evidence="2">
    <location>
        <begin position="2"/>
        <end position="77"/>
    </location>
</feature>
<feature type="modified residue" description="O-(pantetheine 4'-phosphoryl)serine" evidence="2">
    <location>
        <position position="37"/>
    </location>
</feature>
<reference key="1">
    <citation type="journal article" date="2006" name="Nat. Biotechnol.">
        <title>Complete genome sequence of the entomopathogenic and metabolically versatile soil bacterium Pseudomonas entomophila.</title>
        <authorList>
            <person name="Vodovar N."/>
            <person name="Vallenet D."/>
            <person name="Cruveiller S."/>
            <person name="Rouy Z."/>
            <person name="Barbe V."/>
            <person name="Acosta C."/>
            <person name="Cattolico L."/>
            <person name="Jubin C."/>
            <person name="Lajus A."/>
            <person name="Segurens B."/>
            <person name="Vacherie B."/>
            <person name="Wincker P."/>
            <person name="Weissenbach J."/>
            <person name="Lemaitre B."/>
            <person name="Medigue C."/>
            <person name="Boccard F."/>
        </authorList>
    </citation>
    <scope>NUCLEOTIDE SEQUENCE [LARGE SCALE GENOMIC DNA]</scope>
    <source>
        <strain>L48</strain>
    </source>
</reference>